<name>MAL2_MOUSE</name>
<proteinExistence type="evidence at protein level"/>
<dbReference type="EMBL" id="AK035986">
    <property type="protein sequence ID" value="BAC29268.1"/>
    <property type="molecule type" value="mRNA"/>
</dbReference>
<dbReference type="CCDS" id="CCDS27470.1"/>
<dbReference type="RefSeq" id="NP_849251.1">
    <property type="nucleotide sequence ID" value="NM_178920.4"/>
</dbReference>
<dbReference type="SMR" id="Q8BI08"/>
<dbReference type="BioGRID" id="222936">
    <property type="interactions" value="2"/>
</dbReference>
<dbReference type="FunCoup" id="Q8BI08">
    <property type="interactions" value="38"/>
</dbReference>
<dbReference type="STRING" id="10090.ENSMUSP00000025356"/>
<dbReference type="GlyCosmos" id="Q8BI08">
    <property type="glycosylation" value="1 site, No reported glycans"/>
</dbReference>
<dbReference type="GlyGen" id="Q8BI08">
    <property type="glycosylation" value="1 site"/>
</dbReference>
<dbReference type="iPTMnet" id="Q8BI08"/>
<dbReference type="PhosphoSitePlus" id="Q8BI08"/>
<dbReference type="SwissPalm" id="Q8BI08"/>
<dbReference type="jPOST" id="Q8BI08"/>
<dbReference type="PaxDb" id="10090-ENSMUSP00000025356"/>
<dbReference type="ProteomicsDB" id="292083"/>
<dbReference type="Antibodypedia" id="26765">
    <property type="antibodies" value="28 antibodies from 8 providers"/>
</dbReference>
<dbReference type="DNASU" id="105853"/>
<dbReference type="Ensembl" id="ENSMUST00000025356.4">
    <property type="protein sequence ID" value="ENSMUSP00000025356.3"/>
    <property type="gene ID" value="ENSMUSG00000024479.4"/>
</dbReference>
<dbReference type="GeneID" id="105853"/>
<dbReference type="KEGG" id="mmu:105853"/>
<dbReference type="UCSC" id="uc007vrm.2">
    <property type="organism name" value="mouse"/>
</dbReference>
<dbReference type="AGR" id="MGI:2146021"/>
<dbReference type="CTD" id="114569"/>
<dbReference type="MGI" id="MGI:2146021">
    <property type="gene designation" value="Mal2"/>
</dbReference>
<dbReference type="VEuPathDB" id="HostDB:ENSMUSG00000024479"/>
<dbReference type="eggNOG" id="KOG4788">
    <property type="taxonomic scope" value="Eukaryota"/>
</dbReference>
<dbReference type="GeneTree" id="ENSGT00940000159514"/>
<dbReference type="HOGENOM" id="CLU_112950_2_0_1"/>
<dbReference type="InParanoid" id="Q8BI08"/>
<dbReference type="OMA" id="TTVCYGC"/>
<dbReference type="OrthoDB" id="8877859at2759"/>
<dbReference type="PhylomeDB" id="Q8BI08"/>
<dbReference type="TreeFam" id="TF316174"/>
<dbReference type="BioGRID-ORCS" id="105853">
    <property type="hits" value="1 hit in 77 CRISPR screens"/>
</dbReference>
<dbReference type="CD-CODE" id="CE726F99">
    <property type="entry name" value="Postsynaptic density"/>
</dbReference>
<dbReference type="ChiTaRS" id="Mal2">
    <property type="organism name" value="mouse"/>
</dbReference>
<dbReference type="PRO" id="PR:Q8BI08"/>
<dbReference type="Proteomes" id="UP000000589">
    <property type="component" value="Chromosome 15"/>
</dbReference>
<dbReference type="RNAct" id="Q8BI08">
    <property type="molecule type" value="protein"/>
</dbReference>
<dbReference type="Bgee" id="ENSMUSG00000024479">
    <property type="expression patterns" value="Expressed in subiculum and 187 other cell types or tissues"/>
</dbReference>
<dbReference type="ExpressionAtlas" id="Q8BI08">
    <property type="expression patterns" value="baseline and differential"/>
</dbReference>
<dbReference type="GO" id="GO:0016324">
    <property type="term" value="C:apical plasma membrane"/>
    <property type="evidence" value="ECO:0007669"/>
    <property type="project" value="UniProtKB-SubCell"/>
</dbReference>
<dbReference type="GO" id="GO:0045121">
    <property type="term" value="C:membrane raft"/>
    <property type="evidence" value="ECO:0007669"/>
    <property type="project" value="Ensembl"/>
</dbReference>
<dbReference type="InterPro" id="IPR013295">
    <property type="entry name" value="MAL"/>
</dbReference>
<dbReference type="InterPro" id="IPR008253">
    <property type="entry name" value="Marvel"/>
</dbReference>
<dbReference type="InterPro" id="IPR050578">
    <property type="entry name" value="MARVEL-CKLF_proteins"/>
</dbReference>
<dbReference type="PANTHER" id="PTHR22776">
    <property type="entry name" value="MARVEL-CONTAINING POTENTIAL LIPID RAFT-ASSOCIATED PROTEIN"/>
    <property type="match status" value="1"/>
</dbReference>
<dbReference type="PANTHER" id="PTHR22776:SF42">
    <property type="entry name" value="PROTEIN MAL2"/>
    <property type="match status" value="1"/>
</dbReference>
<dbReference type="Pfam" id="PF01284">
    <property type="entry name" value="MARVEL"/>
    <property type="match status" value="1"/>
</dbReference>
<dbReference type="PRINTS" id="PR01884">
    <property type="entry name" value="MALPROTEIN"/>
</dbReference>
<dbReference type="PROSITE" id="PS51225">
    <property type="entry name" value="MARVEL"/>
    <property type="match status" value="1"/>
</dbReference>
<comment type="function">
    <text evidence="1">Member of the machinery of polarized transport. Required for the indirect transcytotic route at the step of the egress of the transcytosing cargo from perinuclear endosomes in order for it to travel to the apical surface via a raft-dependent pathway (By similarity).</text>
</comment>
<comment type="subunit">
    <text evidence="1">Interacts with TPD52L2.</text>
</comment>
<comment type="subcellular location">
    <subcellularLocation>
        <location evidence="1">Cell membrane</location>
        <topology evidence="1">Multi-pass membrane protein</topology>
    </subcellularLocation>
    <subcellularLocation>
        <location evidence="1">Apical cell membrane</location>
        <topology evidence="1">Multi-pass membrane protein</topology>
    </subcellularLocation>
    <text evidence="1">Associated with lipid rafts. In polarized epithelial cells, restricted to the apical surface (By similarity).</text>
</comment>
<comment type="similarity">
    <text evidence="4">Belongs to the MAL family.</text>
</comment>
<accession>Q8BI08</accession>
<evidence type="ECO:0000250" key="1"/>
<evidence type="ECO:0000255" key="2"/>
<evidence type="ECO:0000255" key="3">
    <source>
        <dbReference type="PROSITE-ProRule" id="PRU00581"/>
    </source>
</evidence>
<evidence type="ECO:0000305" key="4"/>
<gene>
    <name type="primary">Mal2</name>
</gene>
<keyword id="KW-1003">Cell membrane</keyword>
<keyword id="KW-0903">Direct protein sequencing</keyword>
<keyword id="KW-0325">Glycoprotein</keyword>
<keyword id="KW-0472">Membrane</keyword>
<keyword id="KW-1185">Reference proteome</keyword>
<keyword id="KW-0812">Transmembrane</keyword>
<keyword id="KW-1133">Transmembrane helix</keyword>
<protein>
    <recommendedName>
        <fullName>Protein MAL2</fullName>
    </recommendedName>
</protein>
<feature type="chain" id="PRO_0000156809" description="Protein MAL2">
    <location>
        <begin position="1"/>
        <end position="175"/>
    </location>
</feature>
<feature type="topological domain" description="Cytoplasmic" evidence="2">
    <location>
        <begin position="1"/>
        <end position="33"/>
    </location>
</feature>
<feature type="transmembrane region" description="Helical" evidence="2">
    <location>
        <begin position="34"/>
        <end position="54"/>
    </location>
</feature>
<feature type="topological domain" description="Lumenal" evidence="2">
    <location>
        <begin position="55"/>
        <end position="65"/>
    </location>
</feature>
<feature type="transmembrane region" description="Helical" evidence="2">
    <location>
        <begin position="66"/>
        <end position="86"/>
    </location>
</feature>
<feature type="topological domain" description="Cytoplasmic" evidence="2">
    <location>
        <begin position="87"/>
        <end position="101"/>
    </location>
</feature>
<feature type="transmembrane region" description="Helical" evidence="2">
    <location>
        <begin position="102"/>
        <end position="122"/>
    </location>
</feature>
<feature type="topological domain" description="Lumenal" evidence="2">
    <location>
        <begin position="123"/>
        <end position="148"/>
    </location>
</feature>
<feature type="transmembrane region" description="Helical" evidence="2">
    <location>
        <begin position="149"/>
        <end position="169"/>
    </location>
</feature>
<feature type="topological domain" description="Cytoplasmic" evidence="2">
    <location>
        <begin position="170"/>
        <end position="175"/>
    </location>
</feature>
<feature type="domain" description="MARVEL" evidence="3">
    <location>
        <begin position="30"/>
        <end position="174"/>
    </location>
</feature>
<feature type="glycosylation site" description="N-linked (GlcNAc...) asparagine" evidence="1">
    <location>
        <position position="131"/>
    </location>
</feature>
<reference key="1">
    <citation type="journal article" date="2005" name="Science">
        <title>The transcriptional landscape of the mammalian genome.</title>
        <authorList>
            <person name="Carninci P."/>
            <person name="Kasukawa T."/>
            <person name="Katayama S."/>
            <person name="Gough J."/>
            <person name="Frith M.C."/>
            <person name="Maeda N."/>
            <person name="Oyama R."/>
            <person name="Ravasi T."/>
            <person name="Lenhard B."/>
            <person name="Wells C."/>
            <person name="Kodzius R."/>
            <person name="Shimokawa K."/>
            <person name="Bajic V.B."/>
            <person name="Brenner S.E."/>
            <person name="Batalov S."/>
            <person name="Forrest A.R."/>
            <person name="Zavolan M."/>
            <person name="Davis M.J."/>
            <person name="Wilming L.G."/>
            <person name="Aidinis V."/>
            <person name="Allen J.E."/>
            <person name="Ambesi-Impiombato A."/>
            <person name="Apweiler R."/>
            <person name="Aturaliya R.N."/>
            <person name="Bailey T.L."/>
            <person name="Bansal M."/>
            <person name="Baxter L."/>
            <person name="Beisel K.W."/>
            <person name="Bersano T."/>
            <person name="Bono H."/>
            <person name="Chalk A.M."/>
            <person name="Chiu K.P."/>
            <person name="Choudhary V."/>
            <person name="Christoffels A."/>
            <person name="Clutterbuck D.R."/>
            <person name="Crowe M.L."/>
            <person name="Dalla E."/>
            <person name="Dalrymple B.P."/>
            <person name="de Bono B."/>
            <person name="Della Gatta G."/>
            <person name="di Bernardo D."/>
            <person name="Down T."/>
            <person name="Engstrom P."/>
            <person name="Fagiolini M."/>
            <person name="Faulkner G."/>
            <person name="Fletcher C.F."/>
            <person name="Fukushima T."/>
            <person name="Furuno M."/>
            <person name="Futaki S."/>
            <person name="Gariboldi M."/>
            <person name="Georgii-Hemming P."/>
            <person name="Gingeras T.R."/>
            <person name="Gojobori T."/>
            <person name="Green R.E."/>
            <person name="Gustincich S."/>
            <person name="Harbers M."/>
            <person name="Hayashi Y."/>
            <person name="Hensch T.K."/>
            <person name="Hirokawa N."/>
            <person name="Hill D."/>
            <person name="Huminiecki L."/>
            <person name="Iacono M."/>
            <person name="Ikeo K."/>
            <person name="Iwama A."/>
            <person name="Ishikawa T."/>
            <person name="Jakt M."/>
            <person name="Kanapin A."/>
            <person name="Katoh M."/>
            <person name="Kawasawa Y."/>
            <person name="Kelso J."/>
            <person name="Kitamura H."/>
            <person name="Kitano H."/>
            <person name="Kollias G."/>
            <person name="Krishnan S.P."/>
            <person name="Kruger A."/>
            <person name="Kummerfeld S.K."/>
            <person name="Kurochkin I.V."/>
            <person name="Lareau L.F."/>
            <person name="Lazarevic D."/>
            <person name="Lipovich L."/>
            <person name="Liu J."/>
            <person name="Liuni S."/>
            <person name="McWilliam S."/>
            <person name="Madan Babu M."/>
            <person name="Madera M."/>
            <person name="Marchionni L."/>
            <person name="Matsuda H."/>
            <person name="Matsuzawa S."/>
            <person name="Miki H."/>
            <person name="Mignone F."/>
            <person name="Miyake S."/>
            <person name="Morris K."/>
            <person name="Mottagui-Tabar S."/>
            <person name="Mulder N."/>
            <person name="Nakano N."/>
            <person name="Nakauchi H."/>
            <person name="Ng P."/>
            <person name="Nilsson R."/>
            <person name="Nishiguchi S."/>
            <person name="Nishikawa S."/>
            <person name="Nori F."/>
            <person name="Ohara O."/>
            <person name="Okazaki Y."/>
            <person name="Orlando V."/>
            <person name="Pang K.C."/>
            <person name="Pavan W.J."/>
            <person name="Pavesi G."/>
            <person name="Pesole G."/>
            <person name="Petrovsky N."/>
            <person name="Piazza S."/>
            <person name="Reed J."/>
            <person name="Reid J.F."/>
            <person name="Ring B.Z."/>
            <person name="Ringwald M."/>
            <person name="Rost B."/>
            <person name="Ruan Y."/>
            <person name="Salzberg S.L."/>
            <person name="Sandelin A."/>
            <person name="Schneider C."/>
            <person name="Schoenbach C."/>
            <person name="Sekiguchi K."/>
            <person name="Semple C.A."/>
            <person name="Seno S."/>
            <person name="Sessa L."/>
            <person name="Sheng Y."/>
            <person name="Shibata Y."/>
            <person name="Shimada H."/>
            <person name="Shimada K."/>
            <person name="Silva D."/>
            <person name="Sinclair B."/>
            <person name="Sperling S."/>
            <person name="Stupka E."/>
            <person name="Sugiura K."/>
            <person name="Sultana R."/>
            <person name="Takenaka Y."/>
            <person name="Taki K."/>
            <person name="Tammoja K."/>
            <person name="Tan S.L."/>
            <person name="Tang S."/>
            <person name="Taylor M.S."/>
            <person name="Tegner J."/>
            <person name="Teichmann S.A."/>
            <person name="Ueda H.R."/>
            <person name="van Nimwegen E."/>
            <person name="Verardo R."/>
            <person name="Wei C.L."/>
            <person name="Yagi K."/>
            <person name="Yamanishi H."/>
            <person name="Zabarovsky E."/>
            <person name="Zhu S."/>
            <person name="Zimmer A."/>
            <person name="Hide W."/>
            <person name="Bult C."/>
            <person name="Grimmond S.M."/>
            <person name="Teasdale R.D."/>
            <person name="Liu E.T."/>
            <person name="Brusic V."/>
            <person name="Quackenbush J."/>
            <person name="Wahlestedt C."/>
            <person name="Mattick J.S."/>
            <person name="Hume D.A."/>
            <person name="Kai C."/>
            <person name="Sasaki D."/>
            <person name="Tomaru Y."/>
            <person name="Fukuda S."/>
            <person name="Kanamori-Katayama M."/>
            <person name="Suzuki M."/>
            <person name="Aoki J."/>
            <person name="Arakawa T."/>
            <person name="Iida J."/>
            <person name="Imamura K."/>
            <person name="Itoh M."/>
            <person name="Kato T."/>
            <person name="Kawaji H."/>
            <person name="Kawagashira N."/>
            <person name="Kawashima T."/>
            <person name="Kojima M."/>
            <person name="Kondo S."/>
            <person name="Konno H."/>
            <person name="Nakano K."/>
            <person name="Ninomiya N."/>
            <person name="Nishio T."/>
            <person name="Okada M."/>
            <person name="Plessy C."/>
            <person name="Shibata K."/>
            <person name="Shiraki T."/>
            <person name="Suzuki S."/>
            <person name="Tagami M."/>
            <person name="Waki K."/>
            <person name="Watahiki A."/>
            <person name="Okamura-Oho Y."/>
            <person name="Suzuki H."/>
            <person name="Kawai J."/>
            <person name="Hayashizaki Y."/>
        </authorList>
    </citation>
    <scope>NUCLEOTIDE SEQUENCE [LARGE SCALE MRNA]</scope>
    <source>
        <strain>C57BL/6J</strain>
        <tissue>Cerebellum</tissue>
    </source>
</reference>
<reference key="2">
    <citation type="submission" date="2007-04" db="UniProtKB">
        <authorList>
            <person name="Lubec G."/>
            <person name="Kang S.U."/>
        </authorList>
    </citation>
    <scope>PROTEIN SEQUENCE OF 22-32</scope>
    <scope>IDENTIFICATION BY MASS SPECTROMETRY</scope>
    <source>
        <strain>C57BL/6J</strain>
        <tissue>Brain</tissue>
    </source>
</reference>
<organism>
    <name type="scientific">Mus musculus</name>
    <name type="common">Mouse</name>
    <dbReference type="NCBI Taxonomy" id="10090"/>
    <lineage>
        <taxon>Eukaryota</taxon>
        <taxon>Metazoa</taxon>
        <taxon>Chordata</taxon>
        <taxon>Craniata</taxon>
        <taxon>Vertebrata</taxon>
        <taxon>Euteleostomi</taxon>
        <taxon>Mammalia</taxon>
        <taxon>Eutheria</taxon>
        <taxon>Euarchontoglires</taxon>
        <taxon>Glires</taxon>
        <taxon>Rodentia</taxon>
        <taxon>Myomorpha</taxon>
        <taxon>Muroidea</taxon>
        <taxon>Muridae</taxon>
        <taxon>Murinae</taxon>
        <taxon>Mus</taxon>
        <taxon>Mus</taxon>
    </lineage>
</organism>
<sequence>MSAGGAVPPPPNPAVSFPAPRVTLPAGPDILRTYSGAFVCLEIVLGGLVWILVASSNVPLPLLQGWVMFVSVTAFFFSLLFLGLFLSGMVTQIDANWNFLDFVYHFIVFVFYFGAFLLEAAATSLHDLQCNTTMTVKPLLNDNQYNINVAATVFAFMTTACYGCSLGLALRRWRP</sequence>